<evidence type="ECO:0000255" key="1">
    <source>
        <dbReference type="HAMAP-Rule" id="MF_00368"/>
    </source>
</evidence>
<evidence type="ECO:0000305" key="2"/>
<sequence>MTIEQILEAIENMKVLELNELVKAAEEKFGVSASAPVMVAGAAAGGPAAEEKTEFDVVLTDVGSSKVGVIKAVREITGLGLKEAKEVVDNAPKTVKEGASKEEADQIKEKLEAAGAKVEVK</sequence>
<proteinExistence type="inferred from homology"/>
<gene>
    <name evidence="1" type="primary">rplL</name>
    <name type="ordered locus">CD630_00640</name>
</gene>
<reference key="1">
    <citation type="journal article" date="2006" name="Nat. Genet.">
        <title>The multidrug-resistant human pathogen Clostridium difficile has a highly mobile, mosaic genome.</title>
        <authorList>
            <person name="Sebaihia M."/>
            <person name="Wren B.W."/>
            <person name="Mullany P."/>
            <person name="Fairweather N.F."/>
            <person name="Minton N."/>
            <person name="Stabler R."/>
            <person name="Thomson N.R."/>
            <person name="Roberts A.P."/>
            <person name="Cerdeno-Tarraga A.M."/>
            <person name="Wang H."/>
            <person name="Holden M.T.G."/>
            <person name="Wright A."/>
            <person name="Churcher C."/>
            <person name="Quail M.A."/>
            <person name="Baker S."/>
            <person name="Bason N."/>
            <person name="Brooks K."/>
            <person name="Chillingworth T."/>
            <person name="Cronin A."/>
            <person name="Davis P."/>
            <person name="Dowd L."/>
            <person name="Fraser A."/>
            <person name="Feltwell T."/>
            <person name="Hance Z."/>
            <person name="Holroyd S."/>
            <person name="Jagels K."/>
            <person name="Moule S."/>
            <person name="Mungall K."/>
            <person name="Price C."/>
            <person name="Rabbinowitsch E."/>
            <person name="Sharp S."/>
            <person name="Simmonds M."/>
            <person name="Stevens K."/>
            <person name="Unwin L."/>
            <person name="Whithead S."/>
            <person name="Dupuy B."/>
            <person name="Dougan G."/>
            <person name="Barrell B."/>
            <person name="Parkhill J."/>
        </authorList>
    </citation>
    <scope>NUCLEOTIDE SEQUENCE [LARGE SCALE GENOMIC DNA]</scope>
    <source>
        <strain>630</strain>
    </source>
</reference>
<organism>
    <name type="scientific">Clostridioides difficile (strain 630)</name>
    <name type="common">Peptoclostridium difficile</name>
    <dbReference type="NCBI Taxonomy" id="272563"/>
    <lineage>
        <taxon>Bacteria</taxon>
        <taxon>Bacillati</taxon>
        <taxon>Bacillota</taxon>
        <taxon>Clostridia</taxon>
        <taxon>Peptostreptococcales</taxon>
        <taxon>Peptostreptococcaceae</taxon>
        <taxon>Clostridioides</taxon>
    </lineage>
</organism>
<protein>
    <recommendedName>
        <fullName evidence="1">Large ribosomal subunit protein bL12</fullName>
    </recommendedName>
    <alternativeName>
        <fullName evidence="2">50S ribosomal protein L7/L12</fullName>
    </alternativeName>
</protein>
<dbReference type="EMBL" id="AM180355">
    <property type="protein sequence ID" value="CAJ66879.1"/>
    <property type="molecule type" value="Genomic_DNA"/>
</dbReference>
<dbReference type="RefSeq" id="WP_003421186.1">
    <property type="nucleotide sequence ID" value="NZ_JAUPES010000049.1"/>
</dbReference>
<dbReference type="RefSeq" id="YP_001086528.1">
    <property type="nucleotide sequence ID" value="NC_009089.1"/>
</dbReference>
<dbReference type="SMR" id="Q18CE7"/>
<dbReference type="STRING" id="272563.CD630_00640"/>
<dbReference type="EnsemblBacteria" id="CAJ66879">
    <property type="protein sequence ID" value="CAJ66879"/>
    <property type="gene ID" value="CD630_00640"/>
</dbReference>
<dbReference type="GeneID" id="66352562"/>
<dbReference type="KEGG" id="cdf:CD630_00640"/>
<dbReference type="KEGG" id="pdc:CDIF630_00130"/>
<dbReference type="PATRIC" id="fig|272563.120.peg.70"/>
<dbReference type="eggNOG" id="COG0222">
    <property type="taxonomic scope" value="Bacteria"/>
</dbReference>
<dbReference type="OrthoDB" id="9811748at2"/>
<dbReference type="PhylomeDB" id="Q18CE7"/>
<dbReference type="BioCyc" id="PDIF272563:G12WB-118-MONOMER"/>
<dbReference type="Proteomes" id="UP000001978">
    <property type="component" value="Chromosome"/>
</dbReference>
<dbReference type="GO" id="GO:0022625">
    <property type="term" value="C:cytosolic large ribosomal subunit"/>
    <property type="evidence" value="ECO:0007669"/>
    <property type="project" value="TreeGrafter"/>
</dbReference>
<dbReference type="GO" id="GO:0003729">
    <property type="term" value="F:mRNA binding"/>
    <property type="evidence" value="ECO:0007669"/>
    <property type="project" value="TreeGrafter"/>
</dbReference>
<dbReference type="GO" id="GO:0003735">
    <property type="term" value="F:structural constituent of ribosome"/>
    <property type="evidence" value="ECO:0007669"/>
    <property type="project" value="InterPro"/>
</dbReference>
<dbReference type="GO" id="GO:0006412">
    <property type="term" value="P:translation"/>
    <property type="evidence" value="ECO:0007669"/>
    <property type="project" value="UniProtKB-UniRule"/>
</dbReference>
<dbReference type="CDD" id="cd00387">
    <property type="entry name" value="Ribosomal_L7_L12"/>
    <property type="match status" value="1"/>
</dbReference>
<dbReference type="FunFam" id="3.30.1390.10:FF:000001">
    <property type="entry name" value="50S ribosomal protein L7/L12"/>
    <property type="match status" value="1"/>
</dbReference>
<dbReference type="Gene3D" id="3.30.1390.10">
    <property type="match status" value="1"/>
</dbReference>
<dbReference type="Gene3D" id="1.20.5.710">
    <property type="entry name" value="Single helix bin"/>
    <property type="match status" value="1"/>
</dbReference>
<dbReference type="HAMAP" id="MF_00368">
    <property type="entry name" value="Ribosomal_bL12"/>
    <property type="match status" value="1"/>
</dbReference>
<dbReference type="InterPro" id="IPR000206">
    <property type="entry name" value="Ribosomal_bL12"/>
</dbReference>
<dbReference type="InterPro" id="IPR013823">
    <property type="entry name" value="Ribosomal_bL12_C"/>
</dbReference>
<dbReference type="InterPro" id="IPR014719">
    <property type="entry name" value="Ribosomal_bL12_C/ClpS-like"/>
</dbReference>
<dbReference type="InterPro" id="IPR008932">
    <property type="entry name" value="Ribosomal_bL12_oligo"/>
</dbReference>
<dbReference type="InterPro" id="IPR036235">
    <property type="entry name" value="Ribosomal_bL12_oligo_N_sf"/>
</dbReference>
<dbReference type="NCBIfam" id="TIGR00855">
    <property type="entry name" value="L12"/>
    <property type="match status" value="1"/>
</dbReference>
<dbReference type="PANTHER" id="PTHR45987">
    <property type="entry name" value="39S RIBOSOMAL PROTEIN L12"/>
    <property type="match status" value="1"/>
</dbReference>
<dbReference type="PANTHER" id="PTHR45987:SF4">
    <property type="entry name" value="LARGE RIBOSOMAL SUBUNIT PROTEIN BL12M"/>
    <property type="match status" value="1"/>
</dbReference>
<dbReference type="Pfam" id="PF00542">
    <property type="entry name" value="Ribosomal_L12"/>
    <property type="match status" value="1"/>
</dbReference>
<dbReference type="Pfam" id="PF16320">
    <property type="entry name" value="Ribosomal_L12_N"/>
    <property type="match status" value="1"/>
</dbReference>
<dbReference type="SUPFAM" id="SSF54736">
    <property type="entry name" value="ClpS-like"/>
    <property type="match status" value="1"/>
</dbReference>
<dbReference type="SUPFAM" id="SSF48300">
    <property type="entry name" value="Ribosomal protein L7/12, oligomerisation (N-terminal) domain"/>
    <property type="match status" value="1"/>
</dbReference>
<name>RL7_CLOD6</name>
<comment type="function">
    <text evidence="1">Forms part of the ribosomal stalk which helps the ribosome interact with GTP-bound translation factors. Is thus essential for accurate translation.</text>
</comment>
<comment type="subunit">
    <text evidence="1">Homodimer. Part of the ribosomal stalk of the 50S ribosomal subunit. Forms a multimeric L10(L12)X complex, where L10 forms an elongated spine to which 2 to 4 L12 dimers bind in a sequential fashion. Binds GTP-bound translation factors.</text>
</comment>
<comment type="similarity">
    <text evidence="1">Belongs to the bacterial ribosomal protein bL12 family.</text>
</comment>
<accession>Q18CE7</accession>
<keyword id="KW-1185">Reference proteome</keyword>
<keyword id="KW-0687">Ribonucleoprotein</keyword>
<keyword id="KW-0689">Ribosomal protein</keyword>
<feature type="chain" id="PRO_1000006991" description="Large ribosomal subunit protein bL12">
    <location>
        <begin position="1"/>
        <end position="121"/>
    </location>
</feature>